<accession>B8CNX4</accession>
<comment type="function">
    <text evidence="1">Catalyzes carboxymethyl transfer from carboxy-S-adenosyl-L-methionine (Cx-SAM) to 5-hydroxyuridine (ho5U) to form 5-carboxymethoxyuridine (cmo5U) at position 34 in tRNAs.</text>
</comment>
<comment type="catalytic activity">
    <reaction evidence="1">
        <text>carboxy-S-adenosyl-L-methionine + 5-hydroxyuridine(34) in tRNA = 5-carboxymethoxyuridine(34) in tRNA + S-adenosyl-L-homocysteine + H(+)</text>
        <dbReference type="Rhea" id="RHEA:52848"/>
        <dbReference type="Rhea" id="RHEA-COMP:13381"/>
        <dbReference type="Rhea" id="RHEA-COMP:13383"/>
        <dbReference type="ChEBI" id="CHEBI:15378"/>
        <dbReference type="ChEBI" id="CHEBI:57856"/>
        <dbReference type="ChEBI" id="CHEBI:134278"/>
        <dbReference type="ChEBI" id="CHEBI:136877"/>
        <dbReference type="ChEBI" id="CHEBI:136879"/>
    </reaction>
</comment>
<comment type="subunit">
    <text evidence="1">Homotetramer.</text>
</comment>
<comment type="similarity">
    <text evidence="1">Belongs to the class I-like SAM-binding methyltransferase superfamily. CmoB family.</text>
</comment>
<feature type="chain" id="PRO_1000201312" description="tRNA U34 carboxymethyltransferase">
    <location>
        <begin position="1"/>
        <end position="330"/>
    </location>
</feature>
<feature type="binding site" evidence="1">
    <location>
        <position position="91"/>
    </location>
    <ligand>
        <name>carboxy-S-adenosyl-L-methionine</name>
        <dbReference type="ChEBI" id="CHEBI:134278"/>
    </ligand>
</feature>
<feature type="binding site" evidence="1">
    <location>
        <position position="105"/>
    </location>
    <ligand>
        <name>carboxy-S-adenosyl-L-methionine</name>
        <dbReference type="ChEBI" id="CHEBI:134278"/>
    </ligand>
</feature>
<feature type="binding site" evidence="1">
    <location>
        <position position="110"/>
    </location>
    <ligand>
        <name>carboxy-S-adenosyl-L-methionine</name>
        <dbReference type="ChEBI" id="CHEBI:134278"/>
    </ligand>
</feature>
<feature type="binding site" evidence="1">
    <location>
        <position position="130"/>
    </location>
    <ligand>
        <name>carboxy-S-adenosyl-L-methionine</name>
        <dbReference type="ChEBI" id="CHEBI:134278"/>
    </ligand>
</feature>
<feature type="binding site" evidence="1">
    <location>
        <begin position="152"/>
        <end position="154"/>
    </location>
    <ligand>
        <name>carboxy-S-adenosyl-L-methionine</name>
        <dbReference type="ChEBI" id="CHEBI:134278"/>
    </ligand>
</feature>
<feature type="binding site" evidence="1">
    <location>
        <begin position="181"/>
        <end position="182"/>
    </location>
    <ligand>
        <name>carboxy-S-adenosyl-L-methionine</name>
        <dbReference type="ChEBI" id="CHEBI:134278"/>
    </ligand>
</feature>
<feature type="binding site" evidence="1">
    <location>
        <position position="196"/>
    </location>
    <ligand>
        <name>carboxy-S-adenosyl-L-methionine</name>
        <dbReference type="ChEBI" id="CHEBI:134278"/>
    </ligand>
</feature>
<feature type="binding site" evidence="1">
    <location>
        <position position="200"/>
    </location>
    <ligand>
        <name>carboxy-S-adenosyl-L-methionine</name>
        <dbReference type="ChEBI" id="CHEBI:134278"/>
    </ligand>
</feature>
<feature type="binding site" evidence="1">
    <location>
        <position position="315"/>
    </location>
    <ligand>
        <name>carboxy-S-adenosyl-L-methionine</name>
        <dbReference type="ChEBI" id="CHEBI:134278"/>
    </ligand>
</feature>
<proteinExistence type="inferred from homology"/>
<name>CMOB_SHEPW</name>
<evidence type="ECO:0000255" key="1">
    <source>
        <dbReference type="HAMAP-Rule" id="MF_01590"/>
    </source>
</evidence>
<keyword id="KW-0808">Transferase</keyword>
<keyword id="KW-0819">tRNA processing</keyword>
<gene>
    <name evidence="1" type="primary">cmoB</name>
    <name type="ordered locus">swp_2348</name>
</gene>
<reference key="1">
    <citation type="journal article" date="2008" name="PLoS ONE">
        <title>Environmental adaptation: genomic analysis of the piezotolerant and psychrotolerant deep-sea iron reducing bacterium Shewanella piezotolerans WP3.</title>
        <authorList>
            <person name="Wang F."/>
            <person name="Wang J."/>
            <person name="Jian H."/>
            <person name="Zhang B."/>
            <person name="Li S."/>
            <person name="Wang F."/>
            <person name="Zeng X."/>
            <person name="Gao L."/>
            <person name="Bartlett D.H."/>
            <person name="Yu J."/>
            <person name="Hu S."/>
            <person name="Xiao X."/>
        </authorList>
    </citation>
    <scope>NUCLEOTIDE SEQUENCE [LARGE SCALE GENOMIC DNA]</scope>
    <source>
        <strain>WP3 / JCM 13877</strain>
    </source>
</reference>
<sequence length="330" mass="37692">MISFSSFYKQISDSSLQHWLETLPAILGEWQREHKHGSLPKWEKVLNKLHYPQPDTIDFTTSVTIGSGEQLSAGEREKLENLLAIFKPWRKGPYSIHGVEIDTEWRSDWKWERIAPHISPLANRTVLDVGCGSGYHMWRMLGEGAKHVVGIDPSPMFMCQFEAVKRIAGNEHPVHFLPLGIEELPPLDAFDTVFSMGVLYHRRSPIDHLIQLRDQLRTGGELVLETLVIDGDENTVLVPEDRYGKMNNVWFLPSVKALMLWLKKSDFIDIRCVDVDVTSLAEQRSTHWMPNESLVDYLDPNDVSLTVEGYPAPKRATIIATKNQPNKETK</sequence>
<organism>
    <name type="scientific">Shewanella piezotolerans (strain WP3 / JCM 13877)</name>
    <dbReference type="NCBI Taxonomy" id="225849"/>
    <lineage>
        <taxon>Bacteria</taxon>
        <taxon>Pseudomonadati</taxon>
        <taxon>Pseudomonadota</taxon>
        <taxon>Gammaproteobacteria</taxon>
        <taxon>Alteromonadales</taxon>
        <taxon>Shewanellaceae</taxon>
        <taxon>Shewanella</taxon>
    </lineage>
</organism>
<dbReference type="EC" id="2.5.1.-" evidence="1"/>
<dbReference type="EMBL" id="CP000472">
    <property type="protein sequence ID" value="ACJ29093.1"/>
    <property type="molecule type" value="Genomic_DNA"/>
</dbReference>
<dbReference type="RefSeq" id="WP_020912453.1">
    <property type="nucleotide sequence ID" value="NC_011566.1"/>
</dbReference>
<dbReference type="SMR" id="B8CNX4"/>
<dbReference type="STRING" id="225849.swp_2348"/>
<dbReference type="KEGG" id="swp:swp_2348"/>
<dbReference type="eggNOG" id="COG0500">
    <property type="taxonomic scope" value="Bacteria"/>
</dbReference>
<dbReference type="HOGENOM" id="CLU_052665_0_0_6"/>
<dbReference type="OrthoDB" id="9773188at2"/>
<dbReference type="Proteomes" id="UP000000753">
    <property type="component" value="Chromosome"/>
</dbReference>
<dbReference type="GO" id="GO:0008168">
    <property type="term" value="F:methyltransferase activity"/>
    <property type="evidence" value="ECO:0007669"/>
    <property type="project" value="TreeGrafter"/>
</dbReference>
<dbReference type="GO" id="GO:0016765">
    <property type="term" value="F:transferase activity, transferring alkyl or aryl (other than methyl) groups"/>
    <property type="evidence" value="ECO:0007669"/>
    <property type="project" value="UniProtKB-UniRule"/>
</dbReference>
<dbReference type="GO" id="GO:0002098">
    <property type="term" value="P:tRNA wobble uridine modification"/>
    <property type="evidence" value="ECO:0007669"/>
    <property type="project" value="InterPro"/>
</dbReference>
<dbReference type="CDD" id="cd02440">
    <property type="entry name" value="AdoMet_MTases"/>
    <property type="match status" value="1"/>
</dbReference>
<dbReference type="Gene3D" id="3.40.50.150">
    <property type="entry name" value="Vaccinia Virus protein VP39"/>
    <property type="match status" value="1"/>
</dbReference>
<dbReference type="HAMAP" id="MF_01590">
    <property type="entry name" value="tRNA_carboxymethyltr_CmoB"/>
    <property type="match status" value="1"/>
</dbReference>
<dbReference type="InterPro" id="IPR010017">
    <property type="entry name" value="CmoB"/>
</dbReference>
<dbReference type="InterPro" id="IPR027555">
    <property type="entry name" value="Mo5U34_MeTrfas-like"/>
</dbReference>
<dbReference type="InterPro" id="IPR029063">
    <property type="entry name" value="SAM-dependent_MTases_sf"/>
</dbReference>
<dbReference type="NCBIfam" id="NF011650">
    <property type="entry name" value="PRK15068.1"/>
    <property type="match status" value="1"/>
</dbReference>
<dbReference type="NCBIfam" id="TIGR00452">
    <property type="entry name" value="tRNA 5-methoxyuridine(34)/uridine 5-oxyacetic acid(34) synthase CmoB"/>
    <property type="match status" value="1"/>
</dbReference>
<dbReference type="PANTHER" id="PTHR43464">
    <property type="entry name" value="METHYLTRANSFERASE"/>
    <property type="match status" value="1"/>
</dbReference>
<dbReference type="PANTHER" id="PTHR43464:SF95">
    <property type="entry name" value="TRNA U34 CARBOXYMETHYLTRANSFERASE"/>
    <property type="match status" value="1"/>
</dbReference>
<dbReference type="Pfam" id="PF08003">
    <property type="entry name" value="Methyltransf_9"/>
    <property type="match status" value="1"/>
</dbReference>
<dbReference type="SUPFAM" id="SSF53335">
    <property type="entry name" value="S-adenosyl-L-methionine-dependent methyltransferases"/>
    <property type="match status" value="1"/>
</dbReference>
<protein>
    <recommendedName>
        <fullName evidence="1">tRNA U34 carboxymethyltransferase</fullName>
        <ecNumber evidence="1">2.5.1.-</ecNumber>
    </recommendedName>
</protein>